<protein>
    <recommendedName>
        <fullName evidence="1">sn-glycerol-3-phosphate import ATP-binding protein UgpC</fullName>
        <ecNumber evidence="1">7.6.2.10</ecNumber>
    </recommendedName>
</protein>
<keyword id="KW-0067">ATP-binding</keyword>
<keyword id="KW-0997">Cell inner membrane</keyword>
<keyword id="KW-1003">Cell membrane</keyword>
<keyword id="KW-0472">Membrane</keyword>
<keyword id="KW-0547">Nucleotide-binding</keyword>
<keyword id="KW-1185">Reference proteome</keyword>
<keyword id="KW-0762">Sugar transport</keyword>
<keyword id="KW-1278">Translocase</keyword>
<keyword id="KW-0813">Transport</keyword>
<sequence>MATLSFRNVKKTYAGNVPVIHGIDMDVADGEFIVIVGPSGCGKSTLMRMVAGLETVTEGEILIDDKVVNTLEPAERDIAMVFQNYALYPHMSVFDNMAYGLKIRRLPKDEIRKRVEAAAQILELGKLLDRRPRALSGGQRQRVAMGRAIVREPKVFLFDEPLSNLDAKLRVAMRLEILKLHRRLNTTSLYVTHDQVEAMTLAHRMVVMYQGVPEQIGTPMEVFEKPASTFVAGFIGSPPMNLLEVAVGGDGIVHTSDGIALDISPLAVPQQVRGRKVVMGLRPEHMLLNAQGLAAEIEMVETLGSEQLVHGRCGKHMVVVRCSTRQFSETPARVGDTLTIGPDGRHPLHWFEADTGRRVEGL</sequence>
<proteinExistence type="inferred from homology"/>
<gene>
    <name evidence="1" type="primary">ugpC</name>
    <name type="ordered locus">BP1284</name>
</gene>
<name>UGPC_BORPE</name>
<reference key="1">
    <citation type="journal article" date="2003" name="Nat. Genet.">
        <title>Comparative analysis of the genome sequences of Bordetella pertussis, Bordetella parapertussis and Bordetella bronchiseptica.</title>
        <authorList>
            <person name="Parkhill J."/>
            <person name="Sebaihia M."/>
            <person name="Preston A."/>
            <person name="Murphy L.D."/>
            <person name="Thomson N.R."/>
            <person name="Harris D.E."/>
            <person name="Holden M.T.G."/>
            <person name="Churcher C.M."/>
            <person name="Bentley S.D."/>
            <person name="Mungall K.L."/>
            <person name="Cerdeno-Tarraga A.-M."/>
            <person name="Temple L."/>
            <person name="James K.D."/>
            <person name="Harris B."/>
            <person name="Quail M.A."/>
            <person name="Achtman M."/>
            <person name="Atkin R."/>
            <person name="Baker S."/>
            <person name="Basham D."/>
            <person name="Bason N."/>
            <person name="Cherevach I."/>
            <person name="Chillingworth T."/>
            <person name="Collins M."/>
            <person name="Cronin A."/>
            <person name="Davis P."/>
            <person name="Doggett J."/>
            <person name="Feltwell T."/>
            <person name="Goble A."/>
            <person name="Hamlin N."/>
            <person name="Hauser H."/>
            <person name="Holroyd S."/>
            <person name="Jagels K."/>
            <person name="Leather S."/>
            <person name="Moule S."/>
            <person name="Norberczak H."/>
            <person name="O'Neil S."/>
            <person name="Ormond D."/>
            <person name="Price C."/>
            <person name="Rabbinowitsch E."/>
            <person name="Rutter S."/>
            <person name="Sanders M."/>
            <person name="Saunders D."/>
            <person name="Seeger K."/>
            <person name="Sharp S."/>
            <person name="Simmonds M."/>
            <person name="Skelton J."/>
            <person name="Squares R."/>
            <person name="Squares S."/>
            <person name="Stevens K."/>
            <person name="Unwin L."/>
            <person name="Whitehead S."/>
            <person name="Barrell B.G."/>
            <person name="Maskell D.J."/>
        </authorList>
    </citation>
    <scope>NUCLEOTIDE SEQUENCE [LARGE SCALE GENOMIC DNA]</scope>
    <source>
        <strain>Tohama I / ATCC BAA-589 / NCTC 13251</strain>
    </source>
</reference>
<feature type="chain" id="PRO_0000289732" description="sn-glycerol-3-phosphate import ATP-binding protein UgpC">
    <location>
        <begin position="1"/>
        <end position="362"/>
    </location>
</feature>
<feature type="domain" description="ABC transporter" evidence="1">
    <location>
        <begin position="4"/>
        <end position="235"/>
    </location>
</feature>
<feature type="binding site" evidence="1">
    <location>
        <begin position="37"/>
        <end position="44"/>
    </location>
    <ligand>
        <name>ATP</name>
        <dbReference type="ChEBI" id="CHEBI:30616"/>
    </ligand>
</feature>
<accession>Q7VYN2</accession>
<comment type="function">
    <text evidence="1">Part of the ABC transporter complex UgpBAEC involved in sn-glycerol-3-phosphate (G3P) import. Responsible for energy coupling to the transport system.</text>
</comment>
<comment type="catalytic activity">
    <reaction evidence="1">
        <text>sn-glycerol 3-phosphate(out) + ATP + H2O = sn-glycerol 3-phosphate(in) + ADP + phosphate + H(+)</text>
        <dbReference type="Rhea" id="RHEA:21668"/>
        <dbReference type="ChEBI" id="CHEBI:15377"/>
        <dbReference type="ChEBI" id="CHEBI:15378"/>
        <dbReference type="ChEBI" id="CHEBI:30616"/>
        <dbReference type="ChEBI" id="CHEBI:43474"/>
        <dbReference type="ChEBI" id="CHEBI:57597"/>
        <dbReference type="ChEBI" id="CHEBI:456216"/>
        <dbReference type="EC" id="7.6.2.10"/>
    </reaction>
</comment>
<comment type="subunit">
    <text evidence="1">The complex is composed of two ATP-binding proteins (UgpC), two transmembrane proteins (UgpA and UgpE) and a solute-binding protein (UgpB).</text>
</comment>
<comment type="subcellular location">
    <subcellularLocation>
        <location evidence="1">Cell inner membrane</location>
        <topology evidence="1">Peripheral membrane protein</topology>
    </subcellularLocation>
</comment>
<comment type="similarity">
    <text evidence="1">Belongs to the ABC transporter superfamily. sn-glycerol-3-phosphate importer (TC 3.A.1.1.3) family.</text>
</comment>
<organism>
    <name type="scientific">Bordetella pertussis (strain Tohama I / ATCC BAA-589 / NCTC 13251)</name>
    <dbReference type="NCBI Taxonomy" id="257313"/>
    <lineage>
        <taxon>Bacteria</taxon>
        <taxon>Pseudomonadati</taxon>
        <taxon>Pseudomonadota</taxon>
        <taxon>Betaproteobacteria</taxon>
        <taxon>Burkholderiales</taxon>
        <taxon>Alcaligenaceae</taxon>
        <taxon>Bordetella</taxon>
    </lineage>
</organism>
<dbReference type="EC" id="7.6.2.10" evidence="1"/>
<dbReference type="EMBL" id="BX640414">
    <property type="protein sequence ID" value="CAE41580.1"/>
    <property type="molecule type" value="Genomic_DNA"/>
</dbReference>
<dbReference type="RefSeq" id="NP_880052.1">
    <property type="nucleotide sequence ID" value="NC_002929.2"/>
</dbReference>
<dbReference type="RefSeq" id="WP_010930289.1">
    <property type="nucleotide sequence ID" value="NZ_CP039022.1"/>
</dbReference>
<dbReference type="SMR" id="Q7VYN2"/>
<dbReference type="STRING" id="257313.BP1284"/>
<dbReference type="PaxDb" id="257313-BP1284"/>
<dbReference type="KEGG" id="bpe:BP1284"/>
<dbReference type="PATRIC" id="fig|257313.5.peg.1384"/>
<dbReference type="eggNOG" id="COG3842">
    <property type="taxonomic scope" value="Bacteria"/>
</dbReference>
<dbReference type="HOGENOM" id="CLU_000604_1_1_4"/>
<dbReference type="Proteomes" id="UP000002676">
    <property type="component" value="Chromosome"/>
</dbReference>
<dbReference type="GO" id="GO:0055052">
    <property type="term" value="C:ATP-binding cassette (ABC) transporter complex, substrate-binding subunit-containing"/>
    <property type="evidence" value="ECO:0007669"/>
    <property type="project" value="TreeGrafter"/>
</dbReference>
<dbReference type="GO" id="GO:0015430">
    <property type="term" value="F:ABC-type glycerol-3-phosphate transporter activity"/>
    <property type="evidence" value="ECO:0007669"/>
    <property type="project" value="UniProtKB-EC"/>
</dbReference>
<dbReference type="GO" id="GO:0005524">
    <property type="term" value="F:ATP binding"/>
    <property type="evidence" value="ECO:0007669"/>
    <property type="project" value="UniProtKB-KW"/>
</dbReference>
<dbReference type="GO" id="GO:0016887">
    <property type="term" value="F:ATP hydrolysis activity"/>
    <property type="evidence" value="ECO:0007669"/>
    <property type="project" value="InterPro"/>
</dbReference>
<dbReference type="GO" id="GO:0008643">
    <property type="term" value="P:carbohydrate transport"/>
    <property type="evidence" value="ECO:0007669"/>
    <property type="project" value="InterPro"/>
</dbReference>
<dbReference type="GO" id="GO:0001407">
    <property type="term" value="P:glycerophosphodiester transmembrane transport"/>
    <property type="evidence" value="ECO:0007669"/>
    <property type="project" value="TreeGrafter"/>
</dbReference>
<dbReference type="CDD" id="cd03301">
    <property type="entry name" value="ABC_MalK_N"/>
    <property type="match status" value="1"/>
</dbReference>
<dbReference type="FunFam" id="3.40.50.300:FF:000042">
    <property type="entry name" value="Maltose/maltodextrin ABC transporter, ATP-binding protein"/>
    <property type="match status" value="1"/>
</dbReference>
<dbReference type="Gene3D" id="2.40.50.100">
    <property type="match status" value="1"/>
</dbReference>
<dbReference type="Gene3D" id="2.40.50.140">
    <property type="entry name" value="Nucleic acid-binding proteins"/>
    <property type="match status" value="1"/>
</dbReference>
<dbReference type="Gene3D" id="3.40.50.300">
    <property type="entry name" value="P-loop containing nucleotide triphosphate hydrolases"/>
    <property type="match status" value="1"/>
</dbReference>
<dbReference type="InterPro" id="IPR003593">
    <property type="entry name" value="AAA+_ATPase"/>
</dbReference>
<dbReference type="InterPro" id="IPR003439">
    <property type="entry name" value="ABC_transporter-like_ATP-bd"/>
</dbReference>
<dbReference type="InterPro" id="IPR017871">
    <property type="entry name" value="ABC_transporter-like_CS"/>
</dbReference>
<dbReference type="InterPro" id="IPR015855">
    <property type="entry name" value="ABC_transpr_MalK-like"/>
</dbReference>
<dbReference type="InterPro" id="IPR047641">
    <property type="entry name" value="ABC_transpr_MalK/UgpC-like"/>
</dbReference>
<dbReference type="InterPro" id="IPR008995">
    <property type="entry name" value="Mo/tungstate-bd_C_term_dom"/>
</dbReference>
<dbReference type="InterPro" id="IPR012340">
    <property type="entry name" value="NA-bd_OB-fold"/>
</dbReference>
<dbReference type="InterPro" id="IPR040582">
    <property type="entry name" value="OB_MalK-like"/>
</dbReference>
<dbReference type="InterPro" id="IPR027417">
    <property type="entry name" value="P-loop_NTPase"/>
</dbReference>
<dbReference type="NCBIfam" id="NF008653">
    <property type="entry name" value="PRK11650.1"/>
    <property type="match status" value="1"/>
</dbReference>
<dbReference type="PANTHER" id="PTHR43875">
    <property type="entry name" value="MALTODEXTRIN IMPORT ATP-BINDING PROTEIN MSMX"/>
    <property type="match status" value="1"/>
</dbReference>
<dbReference type="PANTHER" id="PTHR43875:SF12">
    <property type="entry name" value="SN-GLYCEROL-3-PHOSPHATE IMPORT ATP-BINDING PROTEIN UGPC"/>
    <property type="match status" value="1"/>
</dbReference>
<dbReference type="Pfam" id="PF00005">
    <property type="entry name" value="ABC_tran"/>
    <property type="match status" value="1"/>
</dbReference>
<dbReference type="Pfam" id="PF17912">
    <property type="entry name" value="OB_MalK"/>
    <property type="match status" value="1"/>
</dbReference>
<dbReference type="SMART" id="SM00382">
    <property type="entry name" value="AAA"/>
    <property type="match status" value="1"/>
</dbReference>
<dbReference type="SUPFAM" id="SSF50331">
    <property type="entry name" value="MOP-like"/>
    <property type="match status" value="1"/>
</dbReference>
<dbReference type="SUPFAM" id="SSF52540">
    <property type="entry name" value="P-loop containing nucleoside triphosphate hydrolases"/>
    <property type="match status" value="1"/>
</dbReference>
<dbReference type="PROSITE" id="PS00211">
    <property type="entry name" value="ABC_TRANSPORTER_1"/>
    <property type="match status" value="1"/>
</dbReference>
<dbReference type="PROSITE" id="PS50893">
    <property type="entry name" value="ABC_TRANSPORTER_2"/>
    <property type="match status" value="1"/>
</dbReference>
<dbReference type="PROSITE" id="PS51315">
    <property type="entry name" value="UGPC"/>
    <property type="match status" value="1"/>
</dbReference>
<evidence type="ECO:0000255" key="1">
    <source>
        <dbReference type="HAMAP-Rule" id="MF_01727"/>
    </source>
</evidence>